<evidence type="ECO:0000250" key="1"/>
<evidence type="ECO:0000256" key="2">
    <source>
        <dbReference type="SAM" id="MobiDB-lite"/>
    </source>
</evidence>
<evidence type="ECO:0000303" key="3">
    <source>
    </source>
</evidence>
<evidence type="ECO:0000305" key="4"/>
<comment type="alternative products">
    <event type="alternative splicing"/>
    <isoform>
        <id>A0PG75-1</id>
        <name>1</name>
        <sequence type="displayed"/>
    </isoform>
    <isoform>
        <id>A0PG75-2</id>
        <name>2</name>
        <sequence type="described" ref="VSP_054160"/>
    </isoform>
</comment>
<comment type="domain">
    <text evidence="1">The N-terminal proline-rich domain (PRD) is required for phospholipid scramblase activity.</text>
</comment>
<comment type="similarity">
    <text evidence="4">Belongs to the phospholipid scramblase family.</text>
</comment>
<protein>
    <recommendedName>
        <fullName>Phospholipid scramblase family member 5</fullName>
    </recommendedName>
</protein>
<accession>A0PG75</accession>
<accession>B2RXK5</accession>
<organism>
    <name type="scientific">Homo sapiens</name>
    <name type="common">Human</name>
    <dbReference type="NCBI Taxonomy" id="9606"/>
    <lineage>
        <taxon>Eukaryota</taxon>
        <taxon>Metazoa</taxon>
        <taxon>Chordata</taxon>
        <taxon>Craniata</taxon>
        <taxon>Vertebrata</taxon>
        <taxon>Euteleostomi</taxon>
        <taxon>Mammalia</taxon>
        <taxon>Eutheria</taxon>
        <taxon>Euarchontoglires</taxon>
        <taxon>Primates</taxon>
        <taxon>Haplorrhini</taxon>
        <taxon>Catarrhini</taxon>
        <taxon>Hominidae</taxon>
        <taxon>Homo</taxon>
    </lineage>
</organism>
<gene>
    <name type="primary">PLSCR5</name>
</gene>
<name>PLS5_HUMAN</name>
<dbReference type="EMBL" id="AY436642">
    <property type="protein sequence ID" value="AAR99737.1"/>
    <property type="molecule type" value="mRNA"/>
</dbReference>
<dbReference type="EMBL" id="AC116544">
    <property type="status" value="NOT_ANNOTATED_CDS"/>
    <property type="molecule type" value="Genomic_DNA"/>
</dbReference>
<dbReference type="EMBL" id="BC157886">
    <property type="protein sequence ID" value="AAI57887.1"/>
    <property type="molecule type" value="mRNA"/>
</dbReference>
<dbReference type="EMBL" id="BC171917">
    <property type="protein sequence ID" value="AAI71917.1"/>
    <property type="molecule type" value="mRNA"/>
</dbReference>
<dbReference type="CCDS" id="CCDS46931.1">
    <molecule id="A0PG75-1"/>
</dbReference>
<dbReference type="CCDS" id="CCDS82853.1">
    <molecule id="A0PG75-2"/>
</dbReference>
<dbReference type="RefSeq" id="NP_001078889.1">
    <molecule id="A0PG75-1"/>
    <property type="nucleotide sequence ID" value="NM_001085420.2"/>
</dbReference>
<dbReference type="RefSeq" id="NP_001308174.1">
    <molecule id="A0PG75-2"/>
    <property type="nucleotide sequence ID" value="NM_001321245.2"/>
</dbReference>
<dbReference type="BioGRID" id="133006">
    <property type="interactions" value="61"/>
</dbReference>
<dbReference type="FunCoup" id="A0PG75">
    <property type="interactions" value="12"/>
</dbReference>
<dbReference type="IntAct" id="A0PG75">
    <property type="interactions" value="2"/>
</dbReference>
<dbReference type="STRING" id="9606.ENSP00000390111"/>
<dbReference type="PhosphoSitePlus" id="A0PG75"/>
<dbReference type="BioMuta" id="PLSCR5"/>
<dbReference type="PaxDb" id="9606-ENSP00000390111"/>
<dbReference type="Antibodypedia" id="62410">
    <property type="antibodies" value="28 antibodies from 11 providers"/>
</dbReference>
<dbReference type="DNASU" id="389158"/>
<dbReference type="Ensembl" id="ENST00000443512.2">
    <molecule id="A0PG75-1"/>
    <property type="protein sequence ID" value="ENSP00000390111.1"/>
    <property type="gene ID" value="ENSG00000231213.7"/>
</dbReference>
<dbReference type="Ensembl" id="ENST00000482567.5">
    <molecule id="A0PG75-2"/>
    <property type="protein sequence ID" value="ENSP00000418626.1"/>
    <property type="gene ID" value="ENSG00000231213.7"/>
</dbReference>
<dbReference type="Ensembl" id="ENST00000492200.5">
    <molecule id="A0PG75-1"/>
    <property type="protein sequence ID" value="ENSP00000417184.1"/>
    <property type="gene ID" value="ENSG00000231213.7"/>
</dbReference>
<dbReference type="GeneID" id="389158"/>
<dbReference type="KEGG" id="hsa:389158"/>
<dbReference type="MANE-Select" id="ENST00000443512.2">
    <property type="protein sequence ID" value="ENSP00000390111.1"/>
    <property type="RefSeq nucleotide sequence ID" value="NM_001085420.2"/>
    <property type="RefSeq protein sequence ID" value="NP_001078889.1"/>
</dbReference>
<dbReference type="UCSC" id="uc010hvb.4">
    <molecule id="A0PG75-1"/>
    <property type="organism name" value="human"/>
</dbReference>
<dbReference type="AGR" id="HGNC:19952"/>
<dbReference type="CTD" id="389158"/>
<dbReference type="GeneCards" id="PLSCR5"/>
<dbReference type="HGNC" id="HGNC:19952">
    <property type="gene designation" value="PLSCR5"/>
</dbReference>
<dbReference type="HPA" id="ENSG00000231213">
    <property type="expression patterns" value="Not detected"/>
</dbReference>
<dbReference type="neXtProt" id="NX_A0PG75"/>
<dbReference type="OpenTargets" id="ENSG00000231213"/>
<dbReference type="PharmGKB" id="PA134902268"/>
<dbReference type="VEuPathDB" id="HostDB:ENSG00000231213"/>
<dbReference type="eggNOG" id="KOG0621">
    <property type="taxonomic scope" value="Eukaryota"/>
</dbReference>
<dbReference type="GeneTree" id="ENSGT00940000161728"/>
<dbReference type="HOGENOM" id="CLU_053024_2_0_1"/>
<dbReference type="InParanoid" id="A0PG75"/>
<dbReference type="OMA" id="LWKQTSH"/>
<dbReference type="OrthoDB" id="444338at2759"/>
<dbReference type="PAN-GO" id="A0PG75">
    <property type="GO annotations" value="3 GO annotations based on evolutionary models"/>
</dbReference>
<dbReference type="PhylomeDB" id="A0PG75"/>
<dbReference type="TreeFam" id="TF314939"/>
<dbReference type="PathwayCommons" id="A0PG75"/>
<dbReference type="BioGRID-ORCS" id="389158">
    <property type="hits" value="6 hits in 1141 CRISPR screens"/>
</dbReference>
<dbReference type="GeneWiki" id="PLSCR5"/>
<dbReference type="GenomeRNAi" id="389158"/>
<dbReference type="Pharos" id="A0PG75">
    <property type="development level" value="Tdark"/>
</dbReference>
<dbReference type="PRO" id="PR:A0PG75"/>
<dbReference type="Proteomes" id="UP000005640">
    <property type="component" value="Chromosome 3"/>
</dbReference>
<dbReference type="RNAct" id="A0PG75">
    <property type="molecule type" value="protein"/>
</dbReference>
<dbReference type="Bgee" id="ENSG00000231213">
    <property type="expression patterns" value="Expressed in male germ line stem cell (sensu Vertebrata) in testis and 18 other cell types or tissues"/>
</dbReference>
<dbReference type="GO" id="GO:0005886">
    <property type="term" value="C:plasma membrane"/>
    <property type="evidence" value="ECO:0000318"/>
    <property type="project" value="GO_Central"/>
</dbReference>
<dbReference type="GO" id="GO:0017128">
    <property type="term" value="F:phospholipid scramblase activity"/>
    <property type="evidence" value="ECO:0000318"/>
    <property type="project" value="GO_Central"/>
</dbReference>
<dbReference type="GO" id="GO:0017121">
    <property type="term" value="P:plasma membrane phospholipid scrambling"/>
    <property type="evidence" value="ECO:0000318"/>
    <property type="project" value="GO_Central"/>
</dbReference>
<dbReference type="InterPro" id="IPR005552">
    <property type="entry name" value="Scramblase"/>
</dbReference>
<dbReference type="InterPro" id="IPR025659">
    <property type="entry name" value="Tubby-like_C"/>
</dbReference>
<dbReference type="PANTHER" id="PTHR23248:SF25">
    <property type="entry name" value="PHOSPHOLIPID SCRAMBLASE FAMILY MEMBER 5"/>
    <property type="match status" value="1"/>
</dbReference>
<dbReference type="PANTHER" id="PTHR23248">
    <property type="entry name" value="PHOSPHOLIPID SCRAMBLASE-RELATED"/>
    <property type="match status" value="1"/>
</dbReference>
<dbReference type="Pfam" id="PF03803">
    <property type="entry name" value="Scramblase"/>
    <property type="match status" value="1"/>
</dbReference>
<dbReference type="SUPFAM" id="SSF54518">
    <property type="entry name" value="Tubby C-terminal domain-like"/>
    <property type="match status" value="1"/>
</dbReference>
<sequence length="271" mass="30027">MASKDAQNQRRGLPGFLPGAPDPDQSLPASSNPGNQAWQLSLPLPSSFLPTVSLPPGLEYLSQLDLIIIHQQVELLGMILGTETSNKYEIKNSLGQRIYFAVEESICFNRTFCSTLRSCTLRITDNSGREVITVNRPLRCNSCWCPCYLQELEIQAPPGTIVGYVTQKWDPFLPKFTIQNANKEDILKIVGPCVTCGCFGDVDFEVKTINEKLTIGKISKYWSGFVNDVFTNADNFGIHVPADLDVTVKAAMIGACFLFDFMFFEHSLAGL</sequence>
<proteinExistence type="evidence at transcript level"/>
<reference key="1">
    <citation type="submission" date="2003-10" db="EMBL/GenBank/DDBJ databases">
        <title>Cloning and characterization of a novel putative scramblase.</title>
        <authorList>
            <person name="Li X."/>
            <person name="Xie Y."/>
            <person name="Mao Y."/>
        </authorList>
    </citation>
    <scope>NUCLEOTIDE SEQUENCE [MRNA] (ISOFORM 1)</scope>
</reference>
<reference key="2">
    <citation type="journal article" date="2006" name="Nature">
        <title>The DNA sequence, annotation and analysis of human chromosome 3.</title>
        <authorList>
            <person name="Muzny D.M."/>
            <person name="Scherer S.E."/>
            <person name="Kaul R."/>
            <person name="Wang J."/>
            <person name="Yu J."/>
            <person name="Sudbrak R."/>
            <person name="Buhay C.J."/>
            <person name="Chen R."/>
            <person name="Cree A."/>
            <person name="Ding Y."/>
            <person name="Dugan-Rocha S."/>
            <person name="Gill R."/>
            <person name="Gunaratne P."/>
            <person name="Harris R.A."/>
            <person name="Hawes A.C."/>
            <person name="Hernandez J."/>
            <person name="Hodgson A.V."/>
            <person name="Hume J."/>
            <person name="Jackson A."/>
            <person name="Khan Z.M."/>
            <person name="Kovar-Smith C."/>
            <person name="Lewis L.R."/>
            <person name="Lozado R.J."/>
            <person name="Metzker M.L."/>
            <person name="Milosavljevic A."/>
            <person name="Miner G.R."/>
            <person name="Morgan M.B."/>
            <person name="Nazareth L.V."/>
            <person name="Scott G."/>
            <person name="Sodergren E."/>
            <person name="Song X.-Z."/>
            <person name="Steffen D."/>
            <person name="Wei S."/>
            <person name="Wheeler D.A."/>
            <person name="Wright M.W."/>
            <person name="Worley K.C."/>
            <person name="Yuan Y."/>
            <person name="Zhang Z."/>
            <person name="Adams C.Q."/>
            <person name="Ansari-Lari M.A."/>
            <person name="Ayele M."/>
            <person name="Brown M.J."/>
            <person name="Chen G."/>
            <person name="Chen Z."/>
            <person name="Clendenning J."/>
            <person name="Clerc-Blankenburg K.P."/>
            <person name="Chen R."/>
            <person name="Chen Z."/>
            <person name="Davis C."/>
            <person name="Delgado O."/>
            <person name="Dinh H.H."/>
            <person name="Dong W."/>
            <person name="Draper H."/>
            <person name="Ernst S."/>
            <person name="Fu G."/>
            <person name="Gonzalez-Garay M.L."/>
            <person name="Garcia D.K."/>
            <person name="Gillett W."/>
            <person name="Gu J."/>
            <person name="Hao B."/>
            <person name="Haugen E."/>
            <person name="Havlak P."/>
            <person name="He X."/>
            <person name="Hennig S."/>
            <person name="Hu S."/>
            <person name="Huang W."/>
            <person name="Jackson L.R."/>
            <person name="Jacob L.S."/>
            <person name="Kelly S.H."/>
            <person name="Kube M."/>
            <person name="Levy R."/>
            <person name="Li Z."/>
            <person name="Liu B."/>
            <person name="Liu J."/>
            <person name="Liu W."/>
            <person name="Lu J."/>
            <person name="Maheshwari M."/>
            <person name="Nguyen B.-V."/>
            <person name="Okwuonu G.O."/>
            <person name="Palmeiri A."/>
            <person name="Pasternak S."/>
            <person name="Perez L.M."/>
            <person name="Phelps K.A."/>
            <person name="Plopper F.J."/>
            <person name="Qiang B."/>
            <person name="Raymond C."/>
            <person name="Rodriguez R."/>
            <person name="Saenphimmachak C."/>
            <person name="Santibanez J."/>
            <person name="Shen H."/>
            <person name="Shen Y."/>
            <person name="Subramanian S."/>
            <person name="Tabor P.E."/>
            <person name="Verduzco D."/>
            <person name="Waldron L."/>
            <person name="Wang J."/>
            <person name="Wang J."/>
            <person name="Wang Q."/>
            <person name="Williams G.A."/>
            <person name="Wong G.K.-S."/>
            <person name="Yao Z."/>
            <person name="Zhang J."/>
            <person name="Zhang X."/>
            <person name="Zhao G."/>
            <person name="Zhou J."/>
            <person name="Zhou Y."/>
            <person name="Nelson D."/>
            <person name="Lehrach H."/>
            <person name="Reinhardt R."/>
            <person name="Naylor S.L."/>
            <person name="Yang H."/>
            <person name="Olson M."/>
            <person name="Weinstock G."/>
            <person name="Gibbs R.A."/>
        </authorList>
    </citation>
    <scope>NUCLEOTIDE SEQUENCE [LARGE SCALE GENOMIC DNA]</scope>
</reference>
<reference key="3">
    <citation type="journal article" date="2004" name="Genome Res.">
        <title>The status, quality, and expansion of the NIH full-length cDNA project: the Mammalian Gene Collection (MGC).</title>
        <authorList>
            <consortium name="The MGC Project Team"/>
        </authorList>
    </citation>
    <scope>NUCLEOTIDE SEQUENCE [LARGE SCALE MRNA] (ISOFORM 2)</scope>
</reference>
<keyword id="KW-0025">Alternative splicing</keyword>
<keyword id="KW-1185">Reference proteome</keyword>
<feature type="chain" id="PRO_0000293720" description="Phospholipid scramblase family member 5">
    <location>
        <begin position="1"/>
        <end position="271"/>
    </location>
</feature>
<feature type="region of interest" description="Proline-rich domain (PRD)" evidence="1">
    <location>
        <begin position="1"/>
        <end position="45"/>
    </location>
</feature>
<feature type="region of interest" description="Disordered" evidence="2">
    <location>
        <begin position="1"/>
        <end position="33"/>
    </location>
</feature>
<feature type="compositionally biased region" description="Polar residues" evidence="2">
    <location>
        <begin position="1"/>
        <end position="10"/>
    </location>
</feature>
<feature type="splice variant" id="VSP_054160" description="In isoform 2." evidence="3">
    <location>
        <begin position="52"/>
        <end position="63"/>
    </location>
</feature>
<feature type="sequence variant" id="VAR_057700" description="In dbSNP:rs12107687.">
    <original>R</original>
    <variation>S</variation>
    <location>
        <position position="110"/>
    </location>
</feature>
<feature type="sequence conflict" description="In Ref. 1; AAR99737." evidence="4" ref="1">
    <original>T</original>
    <variation>A</variation>
    <location>
        <position position="82"/>
    </location>
</feature>